<accession>Q43190</accession>
<name>LOX14_SOLTU</name>
<comment type="function">
    <text evidence="3">Plant lipoxygenases may be involved in a number of diverse aspects of plant physiology including growth and development, pest resistance, and senescence or responses to wounding. Catalyzes the hydroperoxidation of lipids containing a cis,cis-1,4-pentadiene structure.</text>
</comment>
<comment type="catalytic activity">
    <reaction>
        <text>(9Z,12Z)-octadecadienoate + O2 = (9S)-hydroperoxy-(10E,12Z)-octadecadienoate</text>
        <dbReference type="Rhea" id="RHEA:30291"/>
        <dbReference type="ChEBI" id="CHEBI:15379"/>
        <dbReference type="ChEBI" id="CHEBI:30245"/>
        <dbReference type="ChEBI" id="CHEBI:60955"/>
        <dbReference type="EC" id="1.13.11.58"/>
    </reaction>
</comment>
<comment type="cofactor">
    <cofactor evidence="3">
        <name>Fe cation</name>
        <dbReference type="ChEBI" id="CHEBI:24875"/>
    </cofactor>
    <text evidence="3">Binds 1 Fe cation per subunit. Iron is tightly bound.</text>
</comment>
<comment type="pathway">
    <text evidence="3">Lipid metabolism; oxylipin biosynthesis.</text>
</comment>
<comment type="subunit">
    <text evidence="1">Monomer.</text>
</comment>
<comment type="subcellular location">
    <subcellularLocation>
        <location evidence="3">Cytoplasm</location>
    </subcellularLocation>
</comment>
<comment type="tissue specificity">
    <text evidence="5 6">Expressed in tubers and roots. Not detected in leaves, flowers, stems, shoot tips, or axillary buds.</text>
</comment>
<comment type="similarity">
    <text evidence="7">Belongs to the lipoxygenase family.</text>
</comment>
<organism>
    <name type="scientific">Solanum tuberosum</name>
    <name type="common">Potato</name>
    <dbReference type="NCBI Taxonomy" id="4113"/>
    <lineage>
        <taxon>Eukaryota</taxon>
        <taxon>Viridiplantae</taxon>
        <taxon>Streptophyta</taxon>
        <taxon>Embryophyta</taxon>
        <taxon>Tracheophyta</taxon>
        <taxon>Spermatophyta</taxon>
        <taxon>Magnoliopsida</taxon>
        <taxon>eudicotyledons</taxon>
        <taxon>Gunneridae</taxon>
        <taxon>Pentapetalae</taxon>
        <taxon>asterids</taxon>
        <taxon>lamiids</taxon>
        <taxon>Solanales</taxon>
        <taxon>Solanaceae</taxon>
        <taxon>Solanoideae</taxon>
        <taxon>Solaneae</taxon>
        <taxon>Solanum</taxon>
    </lineage>
</organism>
<sequence>MLGQIVGGLIGGHHDSKKVKGTVVMMKKNALDFTDLAGSLTDKIFEALGQKVSFQLISSVQSDPANGLQGKHSNPAYLENFLFTLTPLAAGETAFGVTFDWNEEFGVPGAFIIKNTHINEFFLKSLTLEDVPNHGKVHFVCNSWVYPSFRYKSDRIFFANQPYLPSETPELLRKYRENELLTLRGDGTGKREAWDRIYDYDVYNDLGNPDQGKENVRTTLGGSADYPYPRRGRTGRPPTRTDPKSESRIPLILSLDIYVPRDERFGHLKMSDFLTYALKSIVQFILPELHALFDGTPNEFDSFEDVLRLYEGGIRLPQGPLFKALTDAIPLEMIRELLRTDGEGILRFPTPLVIKDSKTAWRTDEEFAREMLAGVNPIIISRLQEFPPKSKLDPEAYGNQNSTITAEHIEDKLDGLTVDEAMNNNKLFILNHHDVLIPYLRRINTTTTKTYASRTLLFLQDNGSLKPLAIELSLPHPDGDQFGVTSKVYTPSDQGVESSIWQLAKAYVAVNDSGVHQLISHWLNTHAVIEPFVIATNRQLSVLHPIHKLLYPHFRDTMNINAMARQILINAGGVLESTVFPSKFAMEMSAVVYKDWVFPDQALPADLVKRGVAVEDSSSPHGVRLLIEDYPYAVDGLEIWSAIKSWVTDYCSFYYGSDEEILKDNELQAWWKELREVGHGDKKNEPWWPEMETPQELIDSCTTIIWIASALHAAVNFGQYPYAGYLPNRPTVSRRFMPEPGTPEYEELKKNPDKAFLKTITAQLQTLLGVSLIEILSRHTTDEIYLGQRESPEWTKDKEPLAAFDKFGKKLTDIEKQIIQRNGDNILINRSGPVNAPYTLLFPTSEGGLTGKGIPNSVSI</sequence>
<proteinExistence type="evidence at transcript level"/>
<keyword id="KW-0963">Cytoplasm</keyword>
<keyword id="KW-0223">Dioxygenase</keyword>
<keyword id="KW-0275">Fatty acid biosynthesis</keyword>
<keyword id="KW-0276">Fatty acid metabolism</keyword>
<keyword id="KW-0408">Iron</keyword>
<keyword id="KW-0444">Lipid biosynthesis</keyword>
<keyword id="KW-0443">Lipid metabolism</keyword>
<keyword id="KW-0479">Metal-binding</keyword>
<keyword id="KW-0560">Oxidoreductase</keyword>
<keyword id="KW-0925">Oxylipin biosynthesis</keyword>
<keyword id="KW-1185">Reference proteome</keyword>
<gene>
    <name type="primary">LOX1.4</name>
    <name type="synonym">POTLX-2</name>
</gene>
<feature type="chain" id="PRO_0000412922" description="Probable linoleate 9S-lipoxygenase 4">
    <location>
        <begin position="1"/>
        <end position="860"/>
    </location>
</feature>
<feature type="domain" description="PLAT" evidence="2">
    <location>
        <begin position="29"/>
        <end position="159"/>
    </location>
</feature>
<feature type="domain" description="Lipoxygenase" evidence="3">
    <location>
        <begin position="162"/>
        <end position="860"/>
    </location>
</feature>
<feature type="region of interest" description="Disordered" evidence="4">
    <location>
        <begin position="209"/>
        <end position="246"/>
    </location>
</feature>
<feature type="binding site" evidence="3">
    <location>
        <position position="521"/>
    </location>
    <ligand>
        <name>Fe cation</name>
        <dbReference type="ChEBI" id="CHEBI:24875"/>
        <note>catalytic</note>
    </ligand>
</feature>
<feature type="binding site" evidence="3">
    <location>
        <position position="526"/>
    </location>
    <ligand>
        <name>Fe cation</name>
        <dbReference type="ChEBI" id="CHEBI:24875"/>
        <note>catalytic</note>
    </ligand>
</feature>
<feature type="binding site" evidence="3">
    <location>
        <position position="712"/>
    </location>
    <ligand>
        <name>Fe cation</name>
        <dbReference type="ChEBI" id="CHEBI:24875"/>
        <note>catalytic</note>
    </ligand>
</feature>
<feature type="binding site" evidence="3">
    <location>
        <position position="716"/>
    </location>
    <ligand>
        <name>Fe cation</name>
        <dbReference type="ChEBI" id="CHEBI:24875"/>
        <note>catalytic</note>
    </ligand>
</feature>
<feature type="binding site" evidence="3">
    <location>
        <position position="860"/>
    </location>
    <ligand>
        <name>Fe cation</name>
        <dbReference type="ChEBI" id="CHEBI:24875"/>
        <note>catalytic</note>
    </ligand>
</feature>
<evidence type="ECO:0000250" key="1"/>
<evidence type="ECO:0000255" key="2">
    <source>
        <dbReference type="PROSITE-ProRule" id="PRU00152"/>
    </source>
</evidence>
<evidence type="ECO:0000255" key="3">
    <source>
        <dbReference type="PROSITE-ProRule" id="PRU00726"/>
    </source>
</evidence>
<evidence type="ECO:0000256" key="4">
    <source>
        <dbReference type="SAM" id="MobiDB-lite"/>
    </source>
</evidence>
<evidence type="ECO:0000269" key="5">
    <source>
    </source>
</evidence>
<evidence type="ECO:0000269" key="6">
    <source ref="1"/>
</evidence>
<evidence type="ECO:0000305" key="7"/>
<protein>
    <recommendedName>
        <fullName>Probable linoleate 9S-lipoxygenase 4</fullName>
        <ecNumber>1.13.11.58</ecNumber>
    </recommendedName>
    <alternativeName>
        <fullName>Root lipoxygenase</fullName>
    </alternativeName>
</protein>
<reference key="1">
    <citation type="online journal article" date="1996" name="Plant Gene Register">
        <title>Potato lipoxygenase genes expressed during the early stages of tuberization.</title>
        <authorList>
            <person name="Kolomiets M.V."/>
            <person name="Hannapel D.J."/>
            <person name="Gladon R.J."/>
        </authorList>
        <locator>PGR96-065</locator>
    </citation>
    <scope>NUCLEOTIDE SEQUENCE [MRNA]</scope>
    <scope>TISSUE SPECIFICITY</scope>
    <source>
        <strain>cv. Superior</strain>
    </source>
</reference>
<reference key="2">
    <citation type="journal article" date="2000" name="Plant Physiol.">
        <title>A leaf lipoxygenase of potato induced specifically by pathogen infection.</title>
        <authorList>
            <person name="Kolomiets M.V."/>
            <person name="Chen H."/>
            <person name="Gladon R.J."/>
            <person name="Braun E.J."/>
            <person name="Hannapel D.J."/>
        </authorList>
    </citation>
    <scope>TISSUE SPECIFICITY</scope>
</reference>
<dbReference type="EC" id="1.13.11.58"/>
<dbReference type="EMBL" id="U60201">
    <property type="protein sequence ID" value="AAB67860.1"/>
    <property type="molecule type" value="mRNA"/>
</dbReference>
<dbReference type="RefSeq" id="NP_001305607.1">
    <property type="nucleotide sequence ID" value="NM_001318678.1"/>
</dbReference>
<dbReference type="SMR" id="Q43190"/>
<dbReference type="FunCoup" id="Q43190">
    <property type="interactions" value="87"/>
</dbReference>
<dbReference type="STRING" id="4113.Q43190"/>
<dbReference type="GeneID" id="102602528"/>
<dbReference type="KEGG" id="sot:102602528"/>
<dbReference type="InParanoid" id="Q43190"/>
<dbReference type="OrthoDB" id="407298at2759"/>
<dbReference type="UniPathway" id="UPA00382"/>
<dbReference type="Proteomes" id="UP000011115">
    <property type="component" value="Unassembled WGS sequence"/>
</dbReference>
<dbReference type="ExpressionAtlas" id="Q43190">
    <property type="expression patterns" value="baseline and differential"/>
</dbReference>
<dbReference type="GO" id="GO:0005737">
    <property type="term" value="C:cytoplasm"/>
    <property type="evidence" value="ECO:0007669"/>
    <property type="project" value="UniProtKB-SubCell"/>
</dbReference>
<dbReference type="GO" id="GO:1990136">
    <property type="term" value="F:linoleate 9S-lipoxygenase activity"/>
    <property type="evidence" value="ECO:0007669"/>
    <property type="project" value="UniProtKB-EC"/>
</dbReference>
<dbReference type="GO" id="GO:0046872">
    <property type="term" value="F:metal ion binding"/>
    <property type="evidence" value="ECO:0007669"/>
    <property type="project" value="UniProtKB-KW"/>
</dbReference>
<dbReference type="GO" id="GO:0016702">
    <property type="term" value="F:oxidoreductase activity, acting on single donors with incorporation of molecular oxygen, incorporation of two atoms of oxygen"/>
    <property type="evidence" value="ECO:0000318"/>
    <property type="project" value="GO_Central"/>
</dbReference>
<dbReference type="GO" id="GO:0006633">
    <property type="term" value="P:fatty acid biosynthetic process"/>
    <property type="evidence" value="ECO:0007669"/>
    <property type="project" value="UniProtKB-KW"/>
</dbReference>
<dbReference type="GO" id="GO:0034440">
    <property type="term" value="P:lipid oxidation"/>
    <property type="evidence" value="ECO:0000318"/>
    <property type="project" value="GO_Central"/>
</dbReference>
<dbReference type="GO" id="GO:0031408">
    <property type="term" value="P:oxylipin biosynthetic process"/>
    <property type="evidence" value="ECO:0007669"/>
    <property type="project" value="UniProtKB-UniPathway"/>
</dbReference>
<dbReference type="CDD" id="cd01751">
    <property type="entry name" value="PLAT_LH2"/>
    <property type="match status" value="1"/>
</dbReference>
<dbReference type="FunFam" id="1.20.245.10:FF:000002">
    <property type="entry name" value="Lipoxygenase"/>
    <property type="match status" value="1"/>
</dbReference>
<dbReference type="FunFam" id="2.60.60.20:FF:000015">
    <property type="entry name" value="Lipoxygenase"/>
    <property type="match status" value="1"/>
</dbReference>
<dbReference type="FunFam" id="3.10.450.60:FF:000002">
    <property type="entry name" value="Lipoxygenase"/>
    <property type="match status" value="1"/>
</dbReference>
<dbReference type="FunFam" id="4.10.372.10:FF:000001">
    <property type="entry name" value="Lipoxygenase"/>
    <property type="match status" value="1"/>
</dbReference>
<dbReference type="FunFam" id="4.10.375.10:FF:000001">
    <property type="entry name" value="Lipoxygenase"/>
    <property type="match status" value="1"/>
</dbReference>
<dbReference type="Gene3D" id="3.10.450.60">
    <property type="match status" value="1"/>
</dbReference>
<dbReference type="Gene3D" id="4.10.375.10">
    <property type="entry name" value="Lipoxygenase-1, Domain 2"/>
    <property type="match status" value="1"/>
</dbReference>
<dbReference type="Gene3D" id="4.10.372.10">
    <property type="entry name" value="Lipoxygenase-1, Domain 3"/>
    <property type="match status" value="1"/>
</dbReference>
<dbReference type="Gene3D" id="1.20.245.10">
    <property type="entry name" value="Lipoxygenase-1, Domain 5"/>
    <property type="match status" value="1"/>
</dbReference>
<dbReference type="Gene3D" id="2.60.60.20">
    <property type="entry name" value="PLAT/LH2 domain"/>
    <property type="match status" value="1"/>
</dbReference>
<dbReference type="InterPro" id="IPR000907">
    <property type="entry name" value="LipOase"/>
</dbReference>
<dbReference type="InterPro" id="IPR013819">
    <property type="entry name" value="LipOase_C"/>
</dbReference>
<dbReference type="InterPro" id="IPR036226">
    <property type="entry name" value="LipOase_C_sf"/>
</dbReference>
<dbReference type="InterPro" id="IPR020834">
    <property type="entry name" value="LipOase_CS"/>
</dbReference>
<dbReference type="InterPro" id="IPR020833">
    <property type="entry name" value="LipOase_Fe_BS"/>
</dbReference>
<dbReference type="InterPro" id="IPR001246">
    <property type="entry name" value="LipOase_plant"/>
</dbReference>
<dbReference type="InterPro" id="IPR042057">
    <property type="entry name" value="Lipoxy_PLAT/LH2"/>
</dbReference>
<dbReference type="InterPro" id="IPR027433">
    <property type="entry name" value="Lipoxygenase_dom_3"/>
</dbReference>
<dbReference type="InterPro" id="IPR001024">
    <property type="entry name" value="PLAT/LH2_dom"/>
</dbReference>
<dbReference type="InterPro" id="IPR036392">
    <property type="entry name" value="PLAT/LH2_dom_sf"/>
</dbReference>
<dbReference type="PANTHER" id="PTHR11771">
    <property type="entry name" value="LIPOXYGENASE"/>
    <property type="match status" value="1"/>
</dbReference>
<dbReference type="Pfam" id="PF00305">
    <property type="entry name" value="Lipoxygenase"/>
    <property type="match status" value="1"/>
</dbReference>
<dbReference type="Pfam" id="PF01477">
    <property type="entry name" value="PLAT"/>
    <property type="match status" value="1"/>
</dbReference>
<dbReference type="PRINTS" id="PR00087">
    <property type="entry name" value="LIPOXYGENASE"/>
</dbReference>
<dbReference type="PRINTS" id="PR00468">
    <property type="entry name" value="PLTLPOXGNASE"/>
</dbReference>
<dbReference type="SMART" id="SM00308">
    <property type="entry name" value="LH2"/>
    <property type="match status" value="1"/>
</dbReference>
<dbReference type="SUPFAM" id="SSF49723">
    <property type="entry name" value="Lipase/lipooxygenase domain (PLAT/LH2 domain)"/>
    <property type="match status" value="1"/>
</dbReference>
<dbReference type="SUPFAM" id="SSF48484">
    <property type="entry name" value="Lipoxigenase"/>
    <property type="match status" value="1"/>
</dbReference>
<dbReference type="PROSITE" id="PS00711">
    <property type="entry name" value="LIPOXYGENASE_1"/>
    <property type="match status" value="1"/>
</dbReference>
<dbReference type="PROSITE" id="PS00081">
    <property type="entry name" value="LIPOXYGENASE_2"/>
    <property type="match status" value="1"/>
</dbReference>
<dbReference type="PROSITE" id="PS51393">
    <property type="entry name" value="LIPOXYGENASE_3"/>
    <property type="match status" value="1"/>
</dbReference>
<dbReference type="PROSITE" id="PS50095">
    <property type="entry name" value="PLAT"/>
    <property type="match status" value="1"/>
</dbReference>